<evidence type="ECO:0000250" key="1"/>
<evidence type="ECO:0000255" key="2"/>
<evidence type="ECO:0000256" key="3">
    <source>
        <dbReference type="SAM" id="MobiDB-lite"/>
    </source>
</evidence>
<evidence type="ECO:0000305" key="4"/>
<feature type="chain" id="PRO_0000284034" description="Histone chaperone ASF1">
    <location>
        <begin position="1"/>
        <end position="264"/>
    </location>
</feature>
<feature type="region of interest" description="Disordered" evidence="3">
    <location>
        <begin position="152"/>
        <end position="264"/>
    </location>
</feature>
<feature type="coiled-coil region" evidence="2">
    <location>
        <begin position="165"/>
        <end position="198"/>
    </location>
</feature>
<feature type="coiled-coil region" evidence="2">
    <location>
        <begin position="231"/>
        <end position="251"/>
    </location>
</feature>
<feature type="compositionally biased region" description="Acidic residues" evidence="3">
    <location>
        <begin position="154"/>
        <end position="213"/>
    </location>
</feature>
<feature type="compositionally biased region" description="Acidic residues" evidence="3">
    <location>
        <begin position="223"/>
        <end position="248"/>
    </location>
</feature>
<organism>
    <name type="scientific">Debaryomyces hansenii (strain ATCC 36239 / CBS 767 / BCRC 21394 / JCM 1990 / NBRC 0083 / IGC 2968)</name>
    <name type="common">Yeast</name>
    <name type="synonym">Torulaspora hansenii</name>
    <dbReference type="NCBI Taxonomy" id="284592"/>
    <lineage>
        <taxon>Eukaryota</taxon>
        <taxon>Fungi</taxon>
        <taxon>Dikarya</taxon>
        <taxon>Ascomycota</taxon>
        <taxon>Saccharomycotina</taxon>
        <taxon>Pichiomycetes</taxon>
        <taxon>Debaryomycetaceae</taxon>
        <taxon>Debaryomyces</taxon>
    </lineage>
</organism>
<name>ASF1_DEBHA</name>
<dbReference type="EMBL" id="CR382133">
    <property type="protein sequence ID" value="CAG84737.1"/>
    <property type="molecule type" value="Genomic_DNA"/>
</dbReference>
<dbReference type="RefSeq" id="XP_456774.1">
    <property type="nucleotide sequence ID" value="XM_456774.1"/>
</dbReference>
<dbReference type="SMR" id="Q6BYE5"/>
<dbReference type="FunCoup" id="Q6BYE5">
    <property type="interactions" value="900"/>
</dbReference>
<dbReference type="STRING" id="284592.Q6BYE5"/>
<dbReference type="GeneID" id="2899597"/>
<dbReference type="KEGG" id="dha:DEHA2A10186g"/>
<dbReference type="VEuPathDB" id="FungiDB:DEHA2A10186g"/>
<dbReference type="eggNOG" id="KOG3265">
    <property type="taxonomic scope" value="Eukaryota"/>
</dbReference>
<dbReference type="HOGENOM" id="CLU_060354_0_2_1"/>
<dbReference type="InParanoid" id="Q6BYE5"/>
<dbReference type="OMA" id="CSYDERE"/>
<dbReference type="OrthoDB" id="29755at2759"/>
<dbReference type="Proteomes" id="UP000000599">
    <property type="component" value="Chromosome A"/>
</dbReference>
<dbReference type="GO" id="GO:0000781">
    <property type="term" value="C:chromosome, telomeric region"/>
    <property type="evidence" value="ECO:0007669"/>
    <property type="project" value="GOC"/>
</dbReference>
<dbReference type="GO" id="GO:0005829">
    <property type="term" value="C:cytosol"/>
    <property type="evidence" value="ECO:0007669"/>
    <property type="project" value="EnsemblFungi"/>
</dbReference>
<dbReference type="GO" id="GO:0070775">
    <property type="term" value="C:H3 histone acetyltransferase complex"/>
    <property type="evidence" value="ECO:0007669"/>
    <property type="project" value="EnsemblFungi"/>
</dbReference>
<dbReference type="GO" id="GO:0005634">
    <property type="term" value="C:nucleus"/>
    <property type="evidence" value="ECO:0007669"/>
    <property type="project" value="UniProtKB-SubCell"/>
</dbReference>
<dbReference type="GO" id="GO:0010698">
    <property type="term" value="F:acetyltransferase activator activity"/>
    <property type="evidence" value="ECO:0007669"/>
    <property type="project" value="EnsemblFungi"/>
</dbReference>
<dbReference type="GO" id="GO:0042393">
    <property type="term" value="F:histone binding"/>
    <property type="evidence" value="ECO:0007669"/>
    <property type="project" value="EnsemblFungi"/>
</dbReference>
<dbReference type="GO" id="GO:0033554">
    <property type="term" value="P:cellular response to stress"/>
    <property type="evidence" value="ECO:0007669"/>
    <property type="project" value="EnsemblFungi"/>
</dbReference>
<dbReference type="GO" id="GO:0006335">
    <property type="term" value="P:DNA replication-dependent chromatin assembly"/>
    <property type="evidence" value="ECO:0007669"/>
    <property type="project" value="EnsemblFungi"/>
</dbReference>
<dbReference type="GO" id="GO:0006334">
    <property type="term" value="P:nucleosome assembly"/>
    <property type="evidence" value="ECO:0007669"/>
    <property type="project" value="InterPro"/>
</dbReference>
<dbReference type="GO" id="GO:0006337">
    <property type="term" value="P:nucleosome disassembly"/>
    <property type="evidence" value="ECO:0007669"/>
    <property type="project" value="EnsemblFungi"/>
</dbReference>
<dbReference type="GO" id="GO:0032968">
    <property type="term" value="P:positive regulation of transcription elongation by RNA polymerase II"/>
    <property type="evidence" value="ECO:0007669"/>
    <property type="project" value="EnsemblFungi"/>
</dbReference>
<dbReference type="GO" id="GO:0036211">
    <property type="term" value="P:protein modification process"/>
    <property type="evidence" value="ECO:0007669"/>
    <property type="project" value="EnsemblFungi"/>
</dbReference>
<dbReference type="GO" id="GO:0030466">
    <property type="term" value="P:silent mating-type cassette heterochromatin formation"/>
    <property type="evidence" value="ECO:0007669"/>
    <property type="project" value="EnsemblFungi"/>
</dbReference>
<dbReference type="GO" id="GO:0031509">
    <property type="term" value="P:subtelomeric heterochromatin formation"/>
    <property type="evidence" value="ECO:0007669"/>
    <property type="project" value="EnsemblFungi"/>
</dbReference>
<dbReference type="FunFam" id="2.60.40.1490:FF:000001">
    <property type="entry name" value="Histone chaperone ASF1"/>
    <property type="match status" value="1"/>
</dbReference>
<dbReference type="Gene3D" id="2.60.40.1490">
    <property type="entry name" value="Histone chaperone ASF1-like"/>
    <property type="match status" value="1"/>
</dbReference>
<dbReference type="InterPro" id="IPR006818">
    <property type="entry name" value="ASF1-like"/>
</dbReference>
<dbReference type="InterPro" id="IPR036747">
    <property type="entry name" value="ASF1-like_sf"/>
</dbReference>
<dbReference type="InterPro" id="IPR017282">
    <property type="entry name" value="Hist_deposition_Asf1"/>
</dbReference>
<dbReference type="PANTHER" id="PTHR12040">
    <property type="entry name" value="ANTI-SILENCING PROTEIN 1"/>
    <property type="match status" value="1"/>
</dbReference>
<dbReference type="PANTHER" id="PTHR12040:SF0">
    <property type="entry name" value="HISTONE CHAPERONE ASF1"/>
    <property type="match status" value="1"/>
</dbReference>
<dbReference type="Pfam" id="PF04729">
    <property type="entry name" value="ASF1_hist_chap"/>
    <property type="match status" value="1"/>
</dbReference>
<dbReference type="PIRSF" id="PIRSF037759">
    <property type="entry name" value="Histone_Asf1"/>
    <property type="match status" value="1"/>
</dbReference>
<dbReference type="SUPFAM" id="SSF101546">
    <property type="entry name" value="ASF1-like"/>
    <property type="match status" value="1"/>
</dbReference>
<accession>Q6BYE5</accession>
<keyword id="KW-0143">Chaperone</keyword>
<keyword id="KW-0156">Chromatin regulator</keyword>
<keyword id="KW-0175">Coiled coil</keyword>
<keyword id="KW-0539">Nucleus</keyword>
<keyword id="KW-1185">Reference proteome</keyword>
<keyword id="KW-0804">Transcription</keyword>
<keyword id="KW-0805">Transcription regulation</keyword>
<reference key="1">
    <citation type="journal article" date="2004" name="Nature">
        <title>Genome evolution in yeasts.</title>
        <authorList>
            <person name="Dujon B."/>
            <person name="Sherman D."/>
            <person name="Fischer G."/>
            <person name="Durrens P."/>
            <person name="Casaregola S."/>
            <person name="Lafontaine I."/>
            <person name="de Montigny J."/>
            <person name="Marck C."/>
            <person name="Neuveglise C."/>
            <person name="Talla E."/>
            <person name="Goffard N."/>
            <person name="Frangeul L."/>
            <person name="Aigle M."/>
            <person name="Anthouard V."/>
            <person name="Babour A."/>
            <person name="Barbe V."/>
            <person name="Barnay S."/>
            <person name="Blanchin S."/>
            <person name="Beckerich J.-M."/>
            <person name="Beyne E."/>
            <person name="Bleykasten C."/>
            <person name="Boisrame A."/>
            <person name="Boyer J."/>
            <person name="Cattolico L."/>
            <person name="Confanioleri F."/>
            <person name="de Daruvar A."/>
            <person name="Despons L."/>
            <person name="Fabre E."/>
            <person name="Fairhead C."/>
            <person name="Ferry-Dumazet H."/>
            <person name="Groppi A."/>
            <person name="Hantraye F."/>
            <person name="Hennequin C."/>
            <person name="Jauniaux N."/>
            <person name="Joyet P."/>
            <person name="Kachouri R."/>
            <person name="Kerrest A."/>
            <person name="Koszul R."/>
            <person name="Lemaire M."/>
            <person name="Lesur I."/>
            <person name="Ma L."/>
            <person name="Muller H."/>
            <person name="Nicaud J.-M."/>
            <person name="Nikolski M."/>
            <person name="Oztas S."/>
            <person name="Ozier-Kalogeropoulos O."/>
            <person name="Pellenz S."/>
            <person name="Potier S."/>
            <person name="Richard G.-F."/>
            <person name="Straub M.-L."/>
            <person name="Suleau A."/>
            <person name="Swennen D."/>
            <person name="Tekaia F."/>
            <person name="Wesolowski-Louvel M."/>
            <person name="Westhof E."/>
            <person name="Wirth B."/>
            <person name="Zeniou-Meyer M."/>
            <person name="Zivanovic Y."/>
            <person name="Bolotin-Fukuhara M."/>
            <person name="Thierry A."/>
            <person name="Bouchier C."/>
            <person name="Caudron B."/>
            <person name="Scarpelli C."/>
            <person name="Gaillardin C."/>
            <person name="Weissenbach J."/>
            <person name="Wincker P."/>
            <person name="Souciet J.-L."/>
        </authorList>
    </citation>
    <scope>NUCLEOTIDE SEQUENCE [LARGE SCALE GENOMIC DNA]</scope>
    <source>
        <strain>ATCC 36239 / CBS 767 / BCRC 21394 / JCM 1990 / NBRC 0083 / IGC 2968</strain>
    </source>
</reference>
<protein>
    <recommendedName>
        <fullName>Histone chaperone ASF1</fullName>
    </recommendedName>
    <alternativeName>
        <fullName>Anti-silencing function protein 1</fullName>
    </alternativeName>
</protein>
<gene>
    <name type="primary">ASF1</name>
    <name type="ordered locus">DEHA2A10186g</name>
</gene>
<sequence>MSIVSLLGIEVLNNPAKFTDPYEFEITFECLEPLKEDLEWKLTYVGSSRSLDHDQELDSILVGPVPVGINKFLFQADPPSPELIPASELVSVTVILLSCSYADREFVRVGYYVNNEYDSEELRENPPAKVQVEHVVRNILAEKPRVTRFNIVWDNEDGNADEYPPEQQVDEEEEEEEEEEEEEDDEEEEEEKDVEGEEGEEGEDAEEAAEVEENGSKEASKEEDIEEDIEEDIEEDIEEDIEIEDEEEAKNADQGETPIDKVQS</sequence>
<comment type="function">
    <text evidence="1">Histone chaperone that facilitates histone deposition and histone exchange and removal during nucleosome assembly and disassembly.</text>
</comment>
<comment type="subunit">
    <text evidence="1">Interacts with histone H3 and histone H4.</text>
</comment>
<comment type="subcellular location">
    <subcellularLocation>
        <location evidence="1">Nucleus</location>
    </subcellularLocation>
</comment>
<comment type="similarity">
    <text evidence="4">Belongs to the ASF1 family.</text>
</comment>
<proteinExistence type="inferred from homology"/>